<gene>
    <name type="primary">CTTNBP2</name>
    <name type="synonym">CORTBP2</name>
</gene>
<organism>
    <name type="scientific">Ornithorhynchus anatinus</name>
    <name type="common">Duckbill platypus</name>
    <dbReference type="NCBI Taxonomy" id="9258"/>
    <lineage>
        <taxon>Eukaryota</taxon>
        <taxon>Metazoa</taxon>
        <taxon>Chordata</taxon>
        <taxon>Craniata</taxon>
        <taxon>Vertebrata</taxon>
        <taxon>Euteleostomi</taxon>
        <taxon>Mammalia</taxon>
        <taxon>Monotremata</taxon>
        <taxon>Ornithorhynchidae</taxon>
        <taxon>Ornithorhynchus</taxon>
    </lineage>
</organism>
<feature type="chain" id="PRO_0000260412" description="Cortactin-binding protein 2">
    <location>
        <begin position="1"/>
        <end position="1635"/>
    </location>
</feature>
<feature type="repeat" description="ANK 1">
    <location>
        <begin position="697"/>
        <end position="727"/>
    </location>
</feature>
<feature type="repeat" description="ANK 2">
    <location>
        <begin position="731"/>
        <end position="760"/>
    </location>
</feature>
<feature type="repeat" description="ANK 3">
    <location>
        <begin position="764"/>
        <end position="793"/>
    </location>
</feature>
<feature type="repeat" description="ANK 4">
    <location>
        <begin position="797"/>
        <end position="826"/>
    </location>
</feature>
<feature type="repeat" description="ANK 5">
    <location>
        <begin position="830"/>
        <end position="859"/>
    </location>
</feature>
<feature type="repeat" description="ANK 6">
    <location>
        <begin position="893"/>
        <end position="923"/>
    </location>
</feature>
<feature type="region of interest" description="Disordered" evidence="5">
    <location>
        <begin position="1"/>
        <end position="20"/>
    </location>
</feature>
<feature type="region of interest" description="Disordered" evidence="5">
    <location>
        <begin position="193"/>
        <end position="219"/>
    </location>
</feature>
<feature type="region of interest" description="Disordered" evidence="5">
    <location>
        <begin position="264"/>
        <end position="469"/>
    </location>
</feature>
<feature type="region of interest" description="Disordered" evidence="5">
    <location>
        <begin position="483"/>
        <end position="582"/>
    </location>
</feature>
<feature type="region of interest" description="Disordered" evidence="5">
    <location>
        <begin position="856"/>
        <end position="876"/>
    </location>
</feature>
<feature type="region of interest" description="Disordered" evidence="5">
    <location>
        <begin position="1420"/>
        <end position="1469"/>
    </location>
</feature>
<feature type="region of interest" description="Disordered" evidence="5">
    <location>
        <begin position="1531"/>
        <end position="1624"/>
    </location>
</feature>
<feature type="coiled-coil region" evidence="4">
    <location>
        <begin position="116"/>
        <end position="273"/>
    </location>
</feature>
<feature type="compositionally biased region" description="Basic and acidic residues" evidence="5">
    <location>
        <begin position="193"/>
        <end position="205"/>
    </location>
</feature>
<feature type="compositionally biased region" description="Basic and acidic residues" evidence="5">
    <location>
        <begin position="264"/>
        <end position="274"/>
    </location>
</feature>
<feature type="compositionally biased region" description="Low complexity" evidence="5">
    <location>
        <begin position="320"/>
        <end position="331"/>
    </location>
</feature>
<feature type="compositionally biased region" description="Low complexity" evidence="5">
    <location>
        <begin position="375"/>
        <end position="395"/>
    </location>
</feature>
<feature type="compositionally biased region" description="Polar residues" evidence="5">
    <location>
        <begin position="402"/>
        <end position="414"/>
    </location>
</feature>
<feature type="compositionally biased region" description="Low complexity" evidence="5">
    <location>
        <begin position="439"/>
        <end position="453"/>
    </location>
</feature>
<feature type="compositionally biased region" description="Polar residues" evidence="5">
    <location>
        <begin position="454"/>
        <end position="466"/>
    </location>
</feature>
<feature type="compositionally biased region" description="Polar residues" evidence="5">
    <location>
        <begin position="858"/>
        <end position="869"/>
    </location>
</feature>
<feature type="compositionally biased region" description="Polar residues" evidence="5">
    <location>
        <begin position="1432"/>
        <end position="1452"/>
    </location>
</feature>
<feature type="compositionally biased region" description="Basic and acidic residues" evidence="5">
    <location>
        <begin position="1453"/>
        <end position="1463"/>
    </location>
</feature>
<feature type="compositionally biased region" description="Polar residues" evidence="5">
    <location>
        <begin position="1546"/>
        <end position="1555"/>
    </location>
</feature>
<feature type="compositionally biased region" description="Polar residues" evidence="5">
    <location>
        <begin position="1563"/>
        <end position="1577"/>
    </location>
</feature>
<feature type="compositionally biased region" description="Basic and acidic residues" evidence="5">
    <location>
        <begin position="1615"/>
        <end position="1624"/>
    </location>
</feature>
<feature type="modified residue" description="Asymmetric dimethylarginine" evidence="1">
    <location>
        <position position="484"/>
    </location>
</feature>
<feature type="modified residue" description="Phosphoserine" evidence="3">
    <location>
        <position position="1498"/>
    </location>
</feature>
<keyword id="KW-0040">ANK repeat</keyword>
<keyword id="KW-0966">Cell projection</keyword>
<keyword id="KW-0175">Coiled coil</keyword>
<keyword id="KW-0963">Cytoplasm</keyword>
<keyword id="KW-0488">Methylation</keyword>
<keyword id="KW-0597">Phosphoprotein</keyword>
<keyword id="KW-1185">Reference proteome</keyword>
<keyword id="KW-0677">Repeat</keyword>
<keyword id="KW-0770">Synapse</keyword>
<evidence type="ECO:0000250" key="1">
    <source>
        <dbReference type="UniProtKB" id="B9EJA2"/>
    </source>
</evidence>
<evidence type="ECO:0000250" key="2">
    <source>
        <dbReference type="UniProtKB" id="Q2IBD4"/>
    </source>
</evidence>
<evidence type="ECO:0000250" key="3">
    <source>
        <dbReference type="UniProtKB" id="Q8WZ74"/>
    </source>
</evidence>
<evidence type="ECO:0000255" key="4"/>
<evidence type="ECO:0000256" key="5">
    <source>
        <dbReference type="SAM" id="MobiDB-lite"/>
    </source>
</evidence>
<comment type="function">
    <text evidence="2">Regulates the dendritic spine distribution of CTTN/cortactin in hippocampal neurons, and thus controls dendritic spinogenesis and dendritic spine maintenance. Associates with the striatin-interacting phosphatase and kinase (STRIPAK) core complex to regulate dendritic spine distribution of the STRIPAK complex in hippocampal neurons.</text>
</comment>
<comment type="subunit">
    <text evidence="2">Interacts with CTTN/cortactin SH3 domain. Interacts with STRN, STRN4/zinedin and MOB4/phocein; this interactions mediate the association with the STRIPAK core complex and may regulate dendritic spine distribution of the STRIPAK complex in hippocampal neurons. Activation of glutamate receptors weakens the interaction with STRN and STRN4.</text>
</comment>
<comment type="subcellular location">
    <subcellularLocation>
        <location evidence="1">Cytoplasm</location>
        <location evidence="1">Cell cortex</location>
    </subcellularLocation>
    <subcellularLocation>
        <location evidence="2">Cell projection</location>
        <location evidence="2">Dendritic spine</location>
    </subcellularLocation>
    <text evidence="2">Remains associated with dendritic spines even after glutamate stimulation.</text>
</comment>
<reference key="1">
    <citation type="submission" date="2006-09" db="EMBL/GenBank/DDBJ databases">
        <title>NISC comparative sequencing initiative.</title>
        <authorList>
            <person name="Antonellis A."/>
            <person name="Ayele K."/>
            <person name="Benjamin B."/>
            <person name="Blakesley R.W."/>
            <person name="Boakye A."/>
            <person name="Bouffard G.G."/>
            <person name="Brinkley C."/>
            <person name="Brooks S."/>
            <person name="Chu G."/>
            <person name="Coleman H."/>
            <person name="Engle J."/>
            <person name="Gestole M."/>
            <person name="Greene A."/>
            <person name="Guan X."/>
            <person name="Gupta J."/>
            <person name="Haghighi P."/>
            <person name="Han J."/>
            <person name="Hansen N."/>
            <person name="Ho S.-L."/>
            <person name="Hu P."/>
            <person name="Hunter G."/>
            <person name="Hurle B."/>
            <person name="Idol J.R."/>
            <person name="Kwong P."/>
            <person name="Laric P."/>
            <person name="Larson S."/>
            <person name="Lee-Lin S.-Q."/>
            <person name="Legaspi R."/>
            <person name="Madden M."/>
            <person name="Maduro Q.L."/>
            <person name="Maduro V.B."/>
            <person name="Margulies E.H."/>
            <person name="Masiello C."/>
            <person name="Maskeri B."/>
            <person name="McDowell J."/>
            <person name="Mojidi H.A."/>
            <person name="Mullikin J.C."/>
            <person name="Oestreicher J.S."/>
            <person name="Park M."/>
            <person name="Portnoy M.E."/>
            <person name="Prasad A."/>
            <person name="Puri O."/>
            <person name="Reddix-Dugue N."/>
            <person name="Schandler K."/>
            <person name="Schueler M.G."/>
            <person name="Sison C."/>
            <person name="Stantripop S."/>
            <person name="Stephen E."/>
            <person name="Taye A."/>
            <person name="Thomas J.W."/>
            <person name="Thomas P.J."/>
            <person name="Tsipouri V."/>
            <person name="Ung L."/>
            <person name="Vogt J.L."/>
            <person name="Wetherby K.D."/>
            <person name="Young A."/>
            <person name="Green E.D."/>
        </authorList>
    </citation>
    <scope>NUCLEOTIDE SEQUENCE [LARGE SCALE GENOMIC DNA]</scope>
</reference>
<dbReference type="EMBL" id="DP000185">
    <property type="protein sequence ID" value="ABI93681.1"/>
    <property type="molecule type" value="Genomic_DNA"/>
</dbReference>
<dbReference type="RefSeq" id="NP_001229664.1">
    <property type="nucleotide sequence ID" value="NM_001242735.1"/>
</dbReference>
<dbReference type="SMR" id="Q07DZ5"/>
<dbReference type="FunCoup" id="Q07DZ5">
    <property type="interactions" value="104"/>
</dbReference>
<dbReference type="STRING" id="9258.ENSOANP00000026834"/>
<dbReference type="GeneID" id="100078686"/>
<dbReference type="KEGG" id="oaa:100078686"/>
<dbReference type="CTD" id="83992"/>
<dbReference type="eggNOG" id="ENOG502QWG2">
    <property type="taxonomic scope" value="Eukaryota"/>
</dbReference>
<dbReference type="InParanoid" id="Q07DZ5"/>
<dbReference type="OrthoDB" id="6021133at2759"/>
<dbReference type="Proteomes" id="UP000002279">
    <property type="component" value="Unplaced"/>
</dbReference>
<dbReference type="GO" id="GO:0005938">
    <property type="term" value="C:cell cortex"/>
    <property type="evidence" value="ECO:0007669"/>
    <property type="project" value="UniProtKB-SubCell"/>
</dbReference>
<dbReference type="GO" id="GO:0043197">
    <property type="term" value="C:dendritic spine"/>
    <property type="evidence" value="ECO:0000250"/>
    <property type="project" value="UniProtKB"/>
</dbReference>
<dbReference type="GO" id="GO:0090443">
    <property type="term" value="C:FAR/SIN/STRIPAK complex"/>
    <property type="evidence" value="ECO:0000250"/>
    <property type="project" value="UniProtKB"/>
</dbReference>
<dbReference type="GO" id="GO:0098978">
    <property type="term" value="C:glutamatergic synapse"/>
    <property type="evidence" value="ECO:0000318"/>
    <property type="project" value="GO_Central"/>
</dbReference>
<dbReference type="GO" id="GO:0050807">
    <property type="term" value="P:regulation of synapse organization"/>
    <property type="evidence" value="ECO:0000318"/>
    <property type="project" value="GO_Central"/>
</dbReference>
<dbReference type="CDD" id="cd14686">
    <property type="entry name" value="bZIP"/>
    <property type="match status" value="1"/>
</dbReference>
<dbReference type="Gene3D" id="1.25.40.20">
    <property type="entry name" value="Ankyrin repeat-containing domain"/>
    <property type="match status" value="1"/>
</dbReference>
<dbReference type="InterPro" id="IPR002110">
    <property type="entry name" value="Ankyrin_rpt"/>
</dbReference>
<dbReference type="InterPro" id="IPR036770">
    <property type="entry name" value="Ankyrin_rpt-contain_sf"/>
</dbReference>
<dbReference type="InterPro" id="IPR019131">
    <property type="entry name" value="Cortactin-binding_p2_N"/>
</dbReference>
<dbReference type="InterPro" id="IPR051165">
    <property type="entry name" value="Multifunctional_ANK_Repeat"/>
</dbReference>
<dbReference type="PANTHER" id="PTHR24123">
    <property type="entry name" value="ANKYRIN REPEAT-CONTAINING"/>
    <property type="match status" value="1"/>
</dbReference>
<dbReference type="PANTHER" id="PTHR24123:SF33">
    <property type="entry name" value="PROTEIN HOS4"/>
    <property type="match status" value="1"/>
</dbReference>
<dbReference type="Pfam" id="PF25408">
    <property type="entry name" value="AAA_lid_NAV1"/>
    <property type="match status" value="1"/>
</dbReference>
<dbReference type="Pfam" id="PF12796">
    <property type="entry name" value="Ank_2"/>
    <property type="match status" value="2"/>
</dbReference>
<dbReference type="Pfam" id="PF09727">
    <property type="entry name" value="CortBP2"/>
    <property type="match status" value="1"/>
</dbReference>
<dbReference type="SMART" id="SM00248">
    <property type="entry name" value="ANK"/>
    <property type="match status" value="6"/>
</dbReference>
<dbReference type="SUPFAM" id="SSF48403">
    <property type="entry name" value="Ankyrin repeat"/>
    <property type="match status" value="1"/>
</dbReference>
<dbReference type="PROSITE" id="PS50297">
    <property type="entry name" value="ANK_REP_REGION"/>
    <property type="match status" value="1"/>
</dbReference>
<dbReference type="PROSITE" id="PS50088">
    <property type="entry name" value="ANK_REPEAT"/>
    <property type="match status" value="4"/>
</dbReference>
<accession>Q07DZ5</accession>
<name>CTTB2_ORNAN</name>
<protein>
    <recommendedName>
        <fullName>Cortactin-binding protein 2</fullName>
        <shortName>CortBP2</shortName>
    </recommendedName>
</protein>
<proteinExistence type="inferred from homology"/>
<sequence length="1635" mass="176029">MATAGGSGQPLCSGPPARTSALPAKKEFDVDTLSKAELRMLLSVMEGELEARDVVIEALRARRKEVFIQERYGRFNLNDPFLALQRDYEAGAGEAEKKPVCTNPLSILEAVMAHCRKMQERMSAQLAAAESRQKKLEMEKSQLHVLQQEHRKLSARLEDERGKNKQVVLMLVKECKQLSSKVGEEGEKLEEAASKLDAEKRKTGELEGALSAERQKSSQMEARMEKQLSEFDTEREQLRAKLSREEALTADLREEIDKMRKTIEQLRKGNDHKPSLSLPRGKAKDRRSVSVSVGTEGPASRAAACQTDPVVEGADPVKKPPVAVPAKPSSAGPLASGTTKGGVGKPSVGRQFSHGDLLTSSSPSIPGPPRIQENGPSSGSTPEPTGSALMPLLNNAPPPAASQNHSLTSSTPNLHSPCANAASYPALNPRVQAARFRFQGNANDQDQNGNTTQSPPSREVSPTSRDNLVVRQLARNTVTQALSRFTGPQAGAPASPRAPHPGEGGTGPPSGGRASAKTPNAPRVDRGNPPPIPPKKPGLSQTPSPPHPQLKVLKDSGRPANAGAKVDSKTGVPPPSAPPHGIRVMNEENLAKSSSPQPPPKPAGDLAPAVPAGCALPAVAASQVGACLGCNPGPSQPACSESSHAIPTAIACSSSINPVSASSCAPWASHSLLVAASGWPPSLTPLLTSCGPVSLGGRPTRLHQAAAQGNVTLLSVLLNEEGLDINHACEDGSSALYSAAKNGHTDCVRLLLNANAQVDDADKNGFTPLCSAAAQGHVKCAELLIAYHADINHAAEGGQTPLYLACKNGNNECIKLLLEAGTDRSITTSDGWTPVHAAVDSGNVDSLTLLMYYGGPESENSGSKDQTGLGSREESRGAMPVISADLINQADKEGWTAAHIAASKGLKNCLEILCGHGRLEAERKDKCDRTAHDVATDDCKHLLENLNALKISVRISVGEKQPAVCGSDDFEAENTICALNIRKQTSWDDFSKAVSQAVTNHFQAISSDGWKRLEDLTFNNATESSVGLSVSSILSVKLGSVTWSTGQSFSQPPWDFLQKNKVEHVTVFLSGPQEGCLSSVTYASMIPLQMLQNYLRLVEQYHNVVFHGPEGSLQDYIAHQIALCLKHKQTAAGFPCEIVKAEVDTNFSKEQLVELFINSACLIPVKQPPVSKKVIVILENLEKASLSELLGDFLAPLENRSSENPYTFQKGNGVANSYYFHENCFLVGTIAKSCLQGSDLLVQQHFRWVQLRWDGEPIHGLLQRFLRRKVMNKFRGKVPSPCDPVCKIIDWILTVWHQLNSCLSRLGTPEALIGPRYFLSCPVVPGHAHVTVKWMSKLWNAVIAPKVQEAILSRASVKRPAVRPSPSQGQQAVVKAALSILLNKAILHGCPLPRAELDQYMAEFRSGCFPLSMVSSYSGSHRKKGESGSWRKVNTSPRKKSGLSSSQTWTKQEATKDGVRNDTGHQNGNSIASLVKQKSLENGHPQVLHLDQRLSLGSDDEVDLVRELQSMCSSKSESDISKIADSKDDFRMFGSSRTDPDPEFSPTMSDRSLPSSEKEVCPLSSNPTLECSNNTPKPESGVSRVKSFLPVPRNKVAQCSPNPKRSNSSSSSNTRQREINNNLKEEFWVLRKNIQ</sequence>